<evidence type="ECO:0000250" key="1"/>
<evidence type="ECO:0000250" key="2">
    <source>
        <dbReference type="UniProtKB" id="P09884"/>
    </source>
</evidence>
<evidence type="ECO:0000250" key="3">
    <source>
        <dbReference type="UniProtKB" id="P49642"/>
    </source>
</evidence>
<evidence type="ECO:0000255" key="4"/>
<evidence type="ECO:0000269" key="5">
    <source>
    </source>
</evidence>
<evidence type="ECO:0000269" key="6">
    <source>
    </source>
</evidence>
<evidence type="ECO:0000305" key="7"/>
<comment type="function">
    <text evidence="2 3 5 6">Catalytic subunit of the DNA primase complex and component of the DNA polymerase alpha complex (also known as the alpha DNA polymerase-primase complex) which play an essential role in the initiation of DNA synthesis (PubMed:8026492, PubMed:8253737). During the S phase of the cell cycle, the DNA polymerase alpha complex (composed of a catalytic subunit POLA1, an accessory subunit POLA2 and two primase subunits, the catalytic subunit PRIM1 and the regulatory subunit PRIM2) is recruited to DNA at the replicative forks via direct interactions with MCM10 and WDHD1 (By similarity). The primase subunit of the polymerase alpha complex initiates DNA synthesis by oligomerising short RNA primers on both leading and lagging strands. These primers are initially extended by the polymerase alpha catalytic subunit and subsequently transferred to polymerase delta and polymerase epsilon for processive synthesis on the lagging and leading strand, respectively (By similarity). In the primase complex, both subunits are necessary for the initial di-nucleotide formation, but the extension of the primer depends only on the catalytic subunit (PubMed:8253737). Can add both ribo- and deoxynucleotides during elongation of the primers (PubMed:8253737). Synthesizes 9-mer RNA primers (also known as the 'unit length' RNA primers) (By similarity). Incorporates only ribonucleotides in the presence of ribo- and deoxy-nucleotide triphosphates (rNTPs, dNTPs). Requires template thymine or cytidine to start the RNA primer synthesis, with an adenine or guanine at its 5'-end (By similarity). Binds single stranded DNA (PubMed:8253737).</text>
</comment>
<comment type="catalytic activity">
    <reaction evidence="5 6">
        <text>ssDNA + n NTP = ssDNA/pppN(pN)n-1 hybrid + (n-1) diphosphate.</text>
        <dbReference type="EC" id="2.7.7.102"/>
    </reaction>
</comment>
<comment type="cofactor">
    <cofactor evidence="3">
        <name>Mg(2+)</name>
        <dbReference type="ChEBI" id="CHEBI:18420"/>
    </cofactor>
    <cofactor evidence="3">
        <name>Mn(2+)</name>
        <dbReference type="ChEBI" id="CHEBI:29035"/>
    </cofactor>
</comment>
<comment type="activity regulation">
    <text evidence="6">The presence of the regulatory subunit PRIM2/p58 accelerates the kinetics of initiation and primer extension.</text>
</comment>
<comment type="biophysicochemical properties">
    <kinetics>
        <KM evidence="6">0.25 mM for ATP</KM>
        <KM evidence="6">3 mM for ATP (in presence of the regulatory PRIM2/p58)</KM>
        <KM evidence="6">4.1 uM for oligo(A)-primed poly(dT)</KM>
    </kinetics>
</comment>
<comment type="subunit">
    <text evidence="3 5 6">Heterodimer of a catalytic subunit PRIM1 and a regulatory subunit PRIM2, also known as the DNA primase complex (PubMed:8026492, PubMed:8253737). Interacts with PRIM2/p58 (via C-terminus) (By similarity). Component of the alpha DNA polymerase complex (also known as the alpha DNA polymerase-primase complex) consisting of four subunits: the catalytic subunit POLA1, the regulatory subunit POLA2, and the primase complex subunits PRIM1 and PRIM2 respectively (PubMed:8253737). Within the complex, POLA1 directly interacts with PRIM2 (PubMed:8253737).</text>
</comment>
<comment type="interaction">
    <interactant intactId="EBI-848742">
        <id>P20664</id>
    </interactant>
    <interactant intactId="EBI-688051">
        <id>P33609</id>
        <label>Pola1</label>
    </interactant>
    <organismsDiffer>false</organismsDiffer>
    <experiments>4</experiments>
</comment>
<comment type="domain">
    <text evidence="3">The catalytic domain (residues 1-190 and 303-408) adopts a typical 'prim' fold structure formed by two three strand beta-sheets that line the inside of the lower and upper parts, each surrounded by alpha-helices on the outside. It comprises a highly conserved catalytic triad, a structural zinc-binding motif and the nucleotide-binding motifs. The Asp-109, Asp-111 and Asp-305 catalytic triad binds two Mn2+ or Mg2+ ions which activate for nucleophilic attack the 3'-hydroxyl of the growing RNA primer or of the first NTP bound at the initiation site. The nucleotide-binding motifs coordinate the phosphates, the ribose and the base of a NTP molecule. The interaction between O2' of the initiating NTP and Asp-305 stabilizes the ribose during the di-nucleotide synthesis. It is proposed that the first nucleotide binds to the elongation site, followed by binding to the initiation site of a second NTP, which will become the 5'-terminal nucleotide of the primer.</text>
</comment>
<comment type="miscellaneous">
    <text evidence="1">The bound zinc ion is not a cofactor. It is bound to a zinc knuckle motif that may be involved in sequence recognition and the binding of ssDNA (By similarity).</text>
</comment>
<comment type="similarity">
    <text evidence="7">Belongs to the eukaryotic-type primase small subunit family.</text>
</comment>
<proteinExistence type="evidence at protein level"/>
<protein>
    <recommendedName>
        <fullName>DNA primase small subunit</fullName>
        <ecNumber evidence="5 6">2.7.7.102</ecNumber>
    </recommendedName>
    <alternativeName>
        <fullName>DNA primase 49 kDa subunit</fullName>
        <shortName>p49</shortName>
    </alternativeName>
</protein>
<keyword id="KW-0007">Acetylation</keyword>
<keyword id="KW-0903">Direct protein sequencing</keyword>
<keyword id="KW-0235">DNA replication</keyword>
<keyword id="KW-0240">DNA-directed RNA polymerase</keyword>
<keyword id="KW-0460">Magnesium</keyword>
<keyword id="KW-0464">Manganese</keyword>
<keyword id="KW-0479">Metal-binding</keyword>
<keyword id="KW-0548">Nucleotidyltransferase</keyword>
<keyword id="KW-0639">Primosome</keyword>
<keyword id="KW-1185">Reference proteome</keyword>
<keyword id="KW-0804">Transcription</keyword>
<keyword id="KW-0808">Transferase</keyword>
<keyword id="KW-0862">Zinc</keyword>
<name>PRI1_MOUSE</name>
<accession>P20664</accession>
<gene>
    <name type="primary">Prim1</name>
</gene>
<sequence length="417" mass="49295">MEPFDPAELPELLKLYYRRLFPYAQYYRWLNYGGVTKNYFQHREFSFTLKDDIYIRYQSFNNQSELEKEMQKMNPYKIDIGAVYSHRPNQHNTVKLGAFQAQEKELVFDIDMTDYDDVRRCCSSADICSKCWTLMTMAMRIIDRALKEDFGFKHRLWVYSGRRGVHCWVCDESVRKLSSAVRSGIVEYLSLVKGGQDVKKKVHLNEKVHPFVRKSINIIKKYFEEYALVGQDILENKENWDKILALVPETIHDELQRGFQKFHSSPQRWEHLRKVANSSQNMKNDKCGPWLEWEVMLQYCFPRLDVNVSKGVNHLLKSPFSVHPKTGRISVPIDFHKVDQFDPFTVPTISAICRELDMVSTHEKEKEENEADSKHRVRGYKKTSLAPYVKVFEQFLENLDKSRKGELLKKSDLQKDF</sequence>
<dbReference type="EC" id="2.7.7.102" evidence="5 6"/>
<dbReference type="EMBL" id="J04620">
    <property type="protein sequence ID" value="AAA39880.1"/>
    <property type="molecule type" value="mRNA"/>
</dbReference>
<dbReference type="EMBL" id="D13544">
    <property type="protein sequence ID" value="BAA02744.1"/>
    <property type="molecule type" value="mRNA"/>
</dbReference>
<dbReference type="CCDS" id="CCDS36086.1"/>
<dbReference type="PIR" id="A33269">
    <property type="entry name" value="A33269"/>
</dbReference>
<dbReference type="RefSeq" id="NP_032947.1">
    <property type="nucleotide sequence ID" value="NM_008921.2"/>
</dbReference>
<dbReference type="SMR" id="P20664"/>
<dbReference type="BioGRID" id="202361">
    <property type="interactions" value="8"/>
</dbReference>
<dbReference type="ComplexPortal" id="CPX-2088">
    <property type="entry name" value="DNA polymerase alpha:primase complex"/>
</dbReference>
<dbReference type="CORUM" id="P20664"/>
<dbReference type="FunCoup" id="P20664">
    <property type="interactions" value="317"/>
</dbReference>
<dbReference type="IntAct" id="P20664">
    <property type="interactions" value="5"/>
</dbReference>
<dbReference type="MINT" id="P20664"/>
<dbReference type="STRING" id="10090.ENSMUSP00000026461"/>
<dbReference type="iPTMnet" id="P20664"/>
<dbReference type="PhosphoSitePlus" id="P20664"/>
<dbReference type="PaxDb" id="10090-ENSMUSP00000026461"/>
<dbReference type="PeptideAtlas" id="P20664"/>
<dbReference type="ProteomicsDB" id="291558"/>
<dbReference type="Pumba" id="P20664"/>
<dbReference type="DNASU" id="19075"/>
<dbReference type="Ensembl" id="ENSMUST00000026461.8">
    <property type="protein sequence ID" value="ENSMUSP00000026461.8"/>
    <property type="gene ID" value="ENSMUSG00000025395.16"/>
</dbReference>
<dbReference type="GeneID" id="19075"/>
<dbReference type="KEGG" id="mmu:19075"/>
<dbReference type="UCSC" id="uc011xpx.2">
    <property type="organism name" value="mouse"/>
</dbReference>
<dbReference type="AGR" id="MGI:97757"/>
<dbReference type="CTD" id="5557"/>
<dbReference type="MGI" id="MGI:97757">
    <property type="gene designation" value="Prim1"/>
</dbReference>
<dbReference type="VEuPathDB" id="HostDB:ENSMUSG00000025395"/>
<dbReference type="eggNOG" id="KOG2851">
    <property type="taxonomic scope" value="Eukaryota"/>
</dbReference>
<dbReference type="GeneTree" id="ENSGT00390000011466"/>
<dbReference type="InParanoid" id="P20664"/>
<dbReference type="OMA" id="NVTRGFN"/>
<dbReference type="OrthoDB" id="19606at2759"/>
<dbReference type="PhylomeDB" id="P20664"/>
<dbReference type="TreeFam" id="TF312823"/>
<dbReference type="Reactome" id="R-MMU-113501">
    <property type="pathway name" value="Inhibition of replication initiation of damaged DNA by RB1/E2F1"/>
</dbReference>
<dbReference type="Reactome" id="R-MMU-174411">
    <property type="pathway name" value="Polymerase switching on the C-strand of the telomere"/>
</dbReference>
<dbReference type="Reactome" id="R-MMU-174430">
    <property type="pathway name" value="Telomere C-strand synthesis initiation"/>
</dbReference>
<dbReference type="Reactome" id="R-MMU-68952">
    <property type="pathway name" value="DNA replication initiation"/>
</dbReference>
<dbReference type="Reactome" id="R-MMU-68962">
    <property type="pathway name" value="Activation of the pre-replicative complex"/>
</dbReference>
<dbReference type="Reactome" id="R-MMU-69091">
    <property type="pathway name" value="Polymerase switching"/>
</dbReference>
<dbReference type="Reactome" id="R-MMU-69166">
    <property type="pathway name" value="Removal of the Flap Intermediate"/>
</dbReference>
<dbReference type="Reactome" id="R-MMU-69183">
    <property type="pathway name" value="Processive synthesis on the lagging strand"/>
</dbReference>
<dbReference type="BioGRID-ORCS" id="19075">
    <property type="hits" value="23 hits in 80 CRISPR screens"/>
</dbReference>
<dbReference type="ChiTaRS" id="Prim1">
    <property type="organism name" value="mouse"/>
</dbReference>
<dbReference type="PRO" id="PR:P20664"/>
<dbReference type="Proteomes" id="UP000000589">
    <property type="component" value="Chromosome 10"/>
</dbReference>
<dbReference type="RNAct" id="P20664">
    <property type="molecule type" value="protein"/>
</dbReference>
<dbReference type="Bgee" id="ENSMUSG00000025395">
    <property type="expression patterns" value="Expressed in floor plate of midbrain and 251 other cell types or tissues"/>
</dbReference>
<dbReference type="ExpressionAtlas" id="P20664">
    <property type="expression patterns" value="baseline and differential"/>
</dbReference>
<dbReference type="GO" id="GO:0005658">
    <property type="term" value="C:alpha DNA polymerase:primase complex"/>
    <property type="evidence" value="ECO:0000314"/>
    <property type="project" value="UniProtKB"/>
</dbReference>
<dbReference type="GO" id="GO:0003899">
    <property type="term" value="F:DNA-directed RNA polymerase activity"/>
    <property type="evidence" value="ECO:0000314"/>
    <property type="project" value="UniProtKB"/>
</dbReference>
<dbReference type="GO" id="GO:0000287">
    <property type="term" value="F:magnesium ion binding"/>
    <property type="evidence" value="ECO:0000250"/>
    <property type="project" value="UniProtKB"/>
</dbReference>
<dbReference type="GO" id="GO:0032553">
    <property type="term" value="F:ribonucleotide binding"/>
    <property type="evidence" value="ECO:0000250"/>
    <property type="project" value="UniProtKB"/>
</dbReference>
<dbReference type="GO" id="GO:0008270">
    <property type="term" value="F:zinc ion binding"/>
    <property type="evidence" value="ECO:0000250"/>
    <property type="project" value="UniProtKB"/>
</dbReference>
<dbReference type="GO" id="GO:0006270">
    <property type="term" value="P:DNA replication initiation"/>
    <property type="evidence" value="ECO:0000314"/>
    <property type="project" value="ComplexPortal"/>
</dbReference>
<dbReference type="GO" id="GO:0006269">
    <property type="term" value="P:DNA replication, synthesis of primer"/>
    <property type="evidence" value="ECO:0000314"/>
    <property type="project" value="UniProtKB"/>
</dbReference>
<dbReference type="CDD" id="cd04860">
    <property type="entry name" value="AE_Prim_S"/>
    <property type="match status" value="1"/>
</dbReference>
<dbReference type="FunFam" id="3.90.920.10:FF:000001">
    <property type="entry name" value="DNA primase"/>
    <property type="match status" value="1"/>
</dbReference>
<dbReference type="Gene3D" id="3.90.920.10">
    <property type="entry name" value="DNA primase, PRIM domain"/>
    <property type="match status" value="1"/>
</dbReference>
<dbReference type="InterPro" id="IPR002755">
    <property type="entry name" value="DNA_primase_S"/>
</dbReference>
<dbReference type="InterPro" id="IPR014052">
    <property type="entry name" value="DNA_primase_ssu_euk/arc"/>
</dbReference>
<dbReference type="NCBIfam" id="TIGR00335">
    <property type="entry name" value="primase_sml"/>
    <property type="match status" value="1"/>
</dbReference>
<dbReference type="PANTHER" id="PTHR10536">
    <property type="entry name" value="DNA PRIMASE SMALL SUBUNIT"/>
    <property type="match status" value="1"/>
</dbReference>
<dbReference type="Pfam" id="PF01896">
    <property type="entry name" value="DNA_primase_S"/>
    <property type="match status" value="1"/>
</dbReference>
<dbReference type="SUPFAM" id="SSF56747">
    <property type="entry name" value="Prim-pol domain"/>
    <property type="match status" value="1"/>
</dbReference>
<feature type="chain" id="PRO_0000046731" description="DNA primase small subunit">
    <location>
        <begin position="1"/>
        <end position="417"/>
    </location>
</feature>
<feature type="short sequence motif" description="Zinc knuckle motif" evidence="3">
    <location>
        <begin position="121"/>
        <end position="131"/>
    </location>
</feature>
<feature type="active site" evidence="4">
    <location>
        <position position="44"/>
    </location>
</feature>
<feature type="active site" evidence="4">
    <location>
        <position position="109"/>
    </location>
</feature>
<feature type="active site" evidence="4">
    <location>
        <position position="111"/>
    </location>
</feature>
<feature type="binding site" evidence="3">
    <location>
        <begin position="109"/>
        <end position="111"/>
    </location>
    <ligand>
        <name>a ribonucleoside 5'-triphosphate</name>
        <dbReference type="ChEBI" id="CHEBI:61557"/>
    </ligand>
</feature>
<feature type="binding site" evidence="3">
    <location>
        <position position="109"/>
    </location>
    <ligand>
        <name>Mg(2+)</name>
        <dbReference type="ChEBI" id="CHEBI:18420"/>
        <label>1</label>
    </ligand>
</feature>
<feature type="binding site" evidence="3">
    <location>
        <position position="109"/>
    </location>
    <ligand>
        <name>Mg(2+)</name>
        <dbReference type="ChEBI" id="CHEBI:18420"/>
        <label>2</label>
    </ligand>
</feature>
<feature type="binding site" evidence="3">
    <location>
        <position position="109"/>
    </location>
    <ligand>
        <name>Mn(2+)</name>
        <dbReference type="ChEBI" id="CHEBI:29035"/>
        <label>1</label>
    </ligand>
</feature>
<feature type="binding site" evidence="3">
    <location>
        <position position="109"/>
    </location>
    <ligand>
        <name>Mn(2+)</name>
        <dbReference type="ChEBI" id="CHEBI:29035"/>
        <label>2</label>
    </ligand>
</feature>
<feature type="binding site" evidence="3">
    <location>
        <position position="111"/>
    </location>
    <ligand>
        <name>Mg(2+)</name>
        <dbReference type="ChEBI" id="CHEBI:18420"/>
        <label>1</label>
    </ligand>
</feature>
<feature type="binding site" evidence="3">
    <location>
        <position position="111"/>
    </location>
    <ligand>
        <name>Mg(2+)</name>
        <dbReference type="ChEBI" id="CHEBI:18420"/>
        <label>2</label>
    </ligand>
</feature>
<feature type="binding site" evidence="3">
    <location>
        <position position="111"/>
    </location>
    <ligand>
        <name>Mn(2+)</name>
        <dbReference type="ChEBI" id="CHEBI:29035"/>
        <label>1</label>
    </ligand>
</feature>
<feature type="binding site" evidence="3">
    <location>
        <position position="111"/>
    </location>
    <ligand>
        <name>Mn(2+)</name>
        <dbReference type="ChEBI" id="CHEBI:29035"/>
        <label>2</label>
    </ligand>
</feature>
<feature type="binding site" evidence="3">
    <location>
        <position position="121"/>
    </location>
    <ligand>
        <name>Zn(2+)</name>
        <dbReference type="ChEBI" id="CHEBI:29105"/>
    </ligand>
</feature>
<feature type="binding site" evidence="3">
    <location>
        <position position="122"/>
    </location>
    <ligand>
        <name>Zn(2+)</name>
        <dbReference type="ChEBI" id="CHEBI:29105"/>
    </ligand>
</feature>
<feature type="binding site" evidence="3">
    <location>
        <position position="128"/>
    </location>
    <ligand>
        <name>Zn(2+)</name>
        <dbReference type="ChEBI" id="CHEBI:29105"/>
    </ligand>
</feature>
<feature type="binding site" evidence="3">
    <location>
        <position position="131"/>
    </location>
    <ligand>
        <name>Zn(2+)</name>
        <dbReference type="ChEBI" id="CHEBI:29105"/>
    </ligand>
</feature>
<feature type="binding site" evidence="3">
    <location>
        <begin position="160"/>
        <end position="166"/>
    </location>
    <ligand>
        <name>a ribonucleoside 5'-triphosphate</name>
        <dbReference type="ChEBI" id="CHEBI:61557"/>
    </ligand>
</feature>
<feature type="binding site" evidence="3">
    <location>
        <position position="305"/>
    </location>
    <ligand>
        <name>Mg(2+)</name>
        <dbReference type="ChEBI" id="CHEBI:18420"/>
        <label>2</label>
    </ligand>
</feature>
<feature type="binding site" evidence="3">
    <location>
        <position position="305"/>
    </location>
    <ligand>
        <name>Mn(2+)</name>
        <dbReference type="ChEBI" id="CHEBI:29035"/>
        <label>2</label>
    </ligand>
</feature>
<feature type="binding site" evidence="3">
    <location>
        <begin position="314"/>
        <end position="317"/>
    </location>
    <ligand>
        <name>a ribonucleoside 5'-triphosphate</name>
        <dbReference type="ChEBI" id="CHEBI:61557"/>
    </ligand>
</feature>
<feature type="binding site" evidence="3">
    <location>
        <position position="323"/>
    </location>
    <ligand>
        <name>a ribonucleoside 5'-triphosphate</name>
        <dbReference type="ChEBI" id="CHEBI:61557"/>
    </ligand>
</feature>
<feature type="modified residue" description="N-acetylmethionine" evidence="3">
    <location>
        <position position="1"/>
    </location>
</feature>
<feature type="sequence conflict" description="In Ref. 1; AAA39880." evidence="7" ref="1">
    <original>Y</original>
    <variation>I</variation>
    <location>
        <position position="57"/>
    </location>
</feature>
<organism>
    <name type="scientific">Mus musculus</name>
    <name type="common">Mouse</name>
    <dbReference type="NCBI Taxonomy" id="10090"/>
    <lineage>
        <taxon>Eukaryota</taxon>
        <taxon>Metazoa</taxon>
        <taxon>Chordata</taxon>
        <taxon>Craniata</taxon>
        <taxon>Vertebrata</taxon>
        <taxon>Euteleostomi</taxon>
        <taxon>Mammalia</taxon>
        <taxon>Eutheria</taxon>
        <taxon>Euarchontoglires</taxon>
        <taxon>Glires</taxon>
        <taxon>Rodentia</taxon>
        <taxon>Myomorpha</taxon>
        <taxon>Muroidea</taxon>
        <taxon>Muridae</taxon>
        <taxon>Murinae</taxon>
        <taxon>Mus</taxon>
        <taxon>Mus</taxon>
    </lineage>
</organism>
<reference key="1">
    <citation type="journal article" date="1989" name="J. Biol. Chem.">
        <title>Mouse primase p49 subunit molecular cloning indicates conserved and divergent regions.</title>
        <authorList>
            <person name="Prussak C.E."/>
            <person name="Almazan M.T."/>
            <person name="Tseng B.Y."/>
        </authorList>
    </citation>
    <scope>NUCLEOTIDE SEQUENCE [MRNA]</scope>
    <scope>PARTIAL PROTEIN SEQUENCE</scope>
    <source>
        <tissue>Lymphoid tissue</tissue>
    </source>
</reference>
<reference key="2">
    <citation type="journal article" date="1993" name="J. Biol. Chem.">
        <title>Molecular cloning of the cDNAs for the four subunits of mouse DNA polymerase alpha-primase complex and their gene expression during cell proliferation and the cell cycle.</title>
        <authorList>
            <person name="Miyazawa H."/>
            <person name="Izumi M."/>
            <person name="Tada S."/>
            <person name="Takada R."/>
            <person name="Masutani M."/>
            <person name="Ui M."/>
            <person name="Hanaoka F."/>
        </authorList>
    </citation>
    <scope>NUCLEOTIDE SEQUENCE [MRNA]</scope>
    <scope>PROTEIN SEQUENCE OF 51-66 AND 222-237</scope>
</reference>
<reference key="3">
    <citation type="journal article" date="1993" name="J. Biol. Chem.">
        <title>Enzymatic characterization of the individual mammalian primase subunits reveals a biphasic mechanism for initiation of DNA replication.</title>
        <authorList>
            <person name="Copeland W.C."/>
            <person name="Wang T.S."/>
        </authorList>
    </citation>
    <scope>FUNCTION</scope>
    <scope>CATALYTIC ACTIVITY</scope>
    <scope>ACTIVITY REGULATION</scope>
    <scope>BIOPHYSICOCHEMICAL PROPERTIES</scope>
    <scope>INTERACTION WITH PRIM2</scope>
    <scope>IDENTIFICATION IN DNA PRIMASE COMPLEX</scope>
</reference>
<reference key="4">
    <citation type="journal article" date="1994" name="Eur. J. Biochem.">
        <title>DNA replication in vitro by recombinant DNA-polymerase-alpha-primase.</title>
        <authorList>
            <person name="Stadlbauer F."/>
            <person name="Brueckner A."/>
            <person name="Rehfuess C."/>
            <person name="Eckerskorn C."/>
            <person name="Lottspeich F."/>
            <person name="Foerster V."/>
            <person name="Tseng B.Y."/>
            <person name="Nasheuer H.-P."/>
        </authorList>
    </citation>
    <scope>FUNCTION</scope>
    <scope>CATALYTIC ACTIVITY</scope>
    <scope>INTERACTION WITH PRIM2</scope>
</reference>
<reference key="5">
    <citation type="journal article" date="2010" name="Cell">
        <title>A tissue-specific atlas of mouse protein phosphorylation and expression.</title>
        <authorList>
            <person name="Huttlin E.L."/>
            <person name="Jedrychowski M.P."/>
            <person name="Elias J.E."/>
            <person name="Goswami T."/>
            <person name="Rad R."/>
            <person name="Beausoleil S.A."/>
            <person name="Villen J."/>
            <person name="Haas W."/>
            <person name="Sowa M.E."/>
            <person name="Gygi S.P."/>
        </authorList>
    </citation>
    <scope>IDENTIFICATION BY MASS SPECTROMETRY [LARGE SCALE ANALYSIS]</scope>
    <source>
        <tissue>Spleen</tissue>
    </source>
</reference>